<gene>
    <name evidence="1" type="primary">cyoE</name>
    <name type="ordered locus">SF0369</name>
    <name type="ordered locus">S0374</name>
</gene>
<comment type="function">
    <text evidence="1">Converts heme B (protoheme IX) to heme O by substitution of the vinyl group on carbon 2 of heme B porphyrin ring with a hydroxyethyl farnesyl side group.</text>
</comment>
<comment type="catalytic activity">
    <reaction evidence="1">
        <text>heme b + (2E,6E)-farnesyl diphosphate + H2O = Fe(II)-heme o + diphosphate</text>
        <dbReference type="Rhea" id="RHEA:28070"/>
        <dbReference type="ChEBI" id="CHEBI:15377"/>
        <dbReference type="ChEBI" id="CHEBI:33019"/>
        <dbReference type="ChEBI" id="CHEBI:60344"/>
        <dbReference type="ChEBI" id="CHEBI:60530"/>
        <dbReference type="ChEBI" id="CHEBI:175763"/>
        <dbReference type="EC" id="2.5.1.141"/>
    </reaction>
</comment>
<comment type="pathway">
    <text evidence="1">Porphyrin-containing compound metabolism; heme O biosynthesis; heme O from protoheme: step 1/1.</text>
</comment>
<comment type="subcellular location">
    <subcellularLocation>
        <location evidence="1">Cell inner membrane</location>
        <topology evidence="1">Multi-pass membrane protein</topology>
    </subcellularLocation>
</comment>
<comment type="miscellaneous">
    <text evidence="1">Carbon 2 of the heme B porphyrin ring is defined according to the Fischer nomenclature.</text>
</comment>
<comment type="similarity">
    <text evidence="1">Belongs to the UbiA prenyltransferase family. Protoheme IX farnesyltransferase subfamily.</text>
</comment>
<comment type="sequence caution" evidence="2">
    <conflict type="erroneous initiation">
        <sequence resource="EMBL-CDS" id="AAN42027"/>
    </conflict>
</comment>
<comment type="sequence caution" evidence="2">
    <conflict type="erroneous initiation">
        <sequence resource="EMBL-CDS" id="AAP15904"/>
    </conflict>
</comment>
<evidence type="ECO:0000255" key="1">
    <source>
        <dbReference type="HAMAP-Rule" id="MF_00154"/>
    </source>
</evidence>
<evidence type="ECO:0000305" key="2"/>
<accession>Q83SF7</accession>
<accession>Q7UDJ2</accession>
<sequence>MMFKQYLQVTKPGIIFGNLISVIGGFLLASKGSIDYPLFIYTLVGVSLVVASGCVFNNYIDRDIDRKMERTKNRVLVKGLISPAVSLVYATLLGIAGFMLLWFGANPLACWLGVMGFVVYVGVYSLYMKRHSVYGTLIGSLSGAAPSVIGYCAVTGEFDSGAAILLAIFSLWQMPHSYAIAIFRFKDYQAANIPVLPVVKGISVAKNHITLYIIAFAVATLMLSLGGYAGYKYLVVAAAVSVWWLGMALRGYKVADDRIWARKLFGFSIIAITALSVMMSVDFMVPDSHTLLAAVW</sequence>
<name>CYOE_SHIFL</name>
<reference key="1">
    <citation type="journal article" date="2002" name="Nucleic Acids Res.">
        <title>Genome sequence of Shigella flexneri 2a: insights into pathogenicity through comparison with genomes of Escherichia coli K12 and O157.</title>
        <authorList>
            <person name="Jin Q."/>
            <person name="Yuan Z."/>
            <person name="Xu J."/>
            <person name="Wang Y."/>
            <person name="Shen Y."/>
            <person name="Lu W."/>
            <person name="Wang J."/>
            <person name="Liu H."/>
            <person name="Yang J."/>
            <person name="Yang F."/>
            <person name="Zhang X."/>
            <person name="Zhang J."/>
            <person name="Yang G."/>
            <person name="Wu H."/>
            <person name="Qu D."/>
            <person name="Dong J."/>
            <person name="Sun L."/>
            <person name="Xue Y."/>
            <person name="Zhao A."/>
            <person name="Gao Y."/>
            <person name="Zhu J."/>
            <person name="Kan B."/>
            <person name="Ding K."/>
            <person name="Chen S."/>
            <person name="Cheng H."/>
            <person name="Yao Z."/>
            <person name="He B."/>
            <person name="Chen R."/>
            <person name="Ma D."/>
            <person name="Qiang B."/>
            <person name="Wen Y."/>
            <person name="Hou Y."/>
            <person name="Yu J."/>
        </authorList>
    </citation>
    <scope>NUCLEOTIDE SEQUENCE [LARGE SCALE GENOMIC DNA]</scope>
    <source>
        <strain>301 / Serotype 2a</strain>
    </source>
</reference>
<reference key="2">
    <citation type="journal article" date="2003" name="Infect. Immun.">
        <title>Complete genome sequence and comparative genomics of Shigella flexneri serotype 2a strain 2457T.</title>
        <authorList>
            <person name="Wei J."/>
            <person name="Goldberg M.B."/>
            <person name="Burland V."/>
            <person name="Venkatesan M.M."/>
            <person name="Deng W."/>
            <person name="Fournier G."/>
            <person name="Mayhew G.F."/>
            <person name="Plunkett G. III"/>
            <person name="Rose D.J."/>
            <person name="Darling A."/>
            <person name="Mau B."/>
            <person name="Perna N.T."/>
            <person name="Payne S.M."/>
            <person name="Runyen-Janecky L.J."/>
            <person name="Zhou S."/>
            <person name="Schwartz D.C."/>
            <person name="Blattner F.R."/>
        </authorList>
    </citation>
    <scope>NUCLEOTIDE SEQUENCE [LARGE SCALE GENOMIC DNA]</scope>
    <source>
        <strain>ATCC 700930 / 2457T / Serotype 2a</strain>
    </source>
</reference>
<organism>
    <name type="scientific">Shigella flexneri</name>
    <dbReference type="NCBI Taxonomy" id="623"/>
    <lineage>
        <taxon>Bacteria</taxon>
        <taxon>Pseudomonadati</taxon>
        <taxon>Pseudomonadota</taxon>
        <taxon>Gammaproteobacteria</taxon>
        <taxon>Enterobacterales</taxon>
        <taxon>Enterobacteriaceae</taxon>
        <taxon>Shigella</taxon>
    </lineage>
</organism>
<dbReference type="EC" id="2.5.1.141" evidence="1"/>
<dbReference type="EMBL" id="AE005674">
    <property type="protein sequence ID" value="AAN42027.2"/>
    <property type="status" value="ALT_INIT"/>
    <property type="molecule type" value="Genomic_DNA"/>
</dbReference>
<dbReference type="EMBL" id="AE014073">
    <property type="protein sequence ID" value="AAP15904.1"/>
    <property type="status" value="ALT_INIT"/>
    <property type="molecule type" value="Genomic_DNA"/>
</dbReference>
<dbReference type="RefSeq" id="NP_706320.2">
    <property type="nucleotide sequence ID" value="NC_004337.2"/>
</dbReference>
<dbReference type="RefSeq" id="WP_000971346.1">
    <property type="nucleotide sequence ID" value="NZ_WPGW01000189.1"/>
</dbReference>
<dbReference type="SMR" id="Q83SF7"/>
<dbReference type="STRING" id="198214.SF0369"/>
<dbReference type="PaxDb" id="198214-SF0369"/>
<dbReference type="GeneID" id="1025986"/>
<dbReference type="KEGG" id="sfl:SF0369"/>
<dbReference type="KEGG" id="sfx:S0374"/>
<dbReference type="PATRIC" id="fig|198214.7.peg.424"/>
<dbReference type="HOGENOM" id="CLU_029631_0_0_6"/>
<dbReference type="UniPathway" id="UPA00834">
    <property type="reaction ID" value="UER00712"/>
</dbReference>
<dbReference type="Proteomes" id="UP000001006">
    <property type="component" value="Chromosome"/>
</dbReference>
<dbReference type="Proteomes" id="UP000002673">
    <property type="component" value="Chromosome"/>
</dbReference>
<dbReference type="GO" id="GO:0005886">
    <property type="term" value="C:plasma membrane"/>
    <property type="evidence" value="ECO:0007669"/>
    <property type="project" value="UniProtKB-SubCell"/>
</dbReference>
<dbReference type="GO" id="GO:0008495">
    <property type="term" value="F:protoheme IX farnesyltransferase activity"/>
    <property type="evidence" value="ECO:0007669"/>
    <property type="project" value="UniProtKB-UniRule"/>
</dbReference>
<dbReference type="GO" id="GO:0048034">
    <property type="term" value="P:heme O biosynthetic process"/>
    <property type="evidence" value="ECO:0007669"/>
    <property type="project" value="UniProtKB-UniRule"/>
</dbReference>
<dbReference type="CDD" id="cd13957">
    <property type="entry name" value="PT_UbiA_Cox10"/>
    <property type="match status" value="1"/>
</dbReference>
<dbReference type="FunFam" id="1.10.357.140:FF:000001">
    <property type="entry name" value="Protoheme IX farnesyltransferase"/>
    <property type="match status" value="1"/>
</dbReference>
<dbReference type="Gene3D" id="1.10.357.140">
    <property type="entry name" value="UbiA prenyltransferase"/>
    <property type="match status" value="1"/>
</dbReference>
<dbReference type="HAMAP" id="MF_00154">
    <property type="entry name" value="CyoE_CtaB"/>
    <property type="match status" value="1"/>
</dbReference>
<dbReference type="InterPro" id="IPR006369">
    <property type="entry name" value="Protohaem_IX_farnesylTrfase"/>
</dbReference>
<dbReference type="InterPro" id="IPR000537">
    <property type="entry name" value="UbiA_prenyltransferase"/>
</dbReference>
<dbReference type="InterPro" id="IPR030470">
    <property type="entry name" value="UbiA_prenylTrfase_CS"/>
</dbReference>
<dbReference type="InterPro" id="IPR044878">
    <property type="entry name" value="UbiA_sf"/>
</dbReference>
<dbReference type="NCBIfam" id="TIGR01473">
    <property type="entry name" value="cyoE_ctaB"/>
    <property type="match status" value="1"/>
</dbReference>
<dbReference type="NCBIfam" id="NF003348">
    <property type="entry name" value="PRK04375.1-1"/>
    <property type="match status" value="1"/>
</dbReference>
<dbReference type="PANTHER" id="PTHR43448">
    <property type="entry name" value="PROTOHEME IX FARNESYLTRANSFERASE, MITOCHONDRIAL"/>
    <property type="match status" value="1"/>
</dbReference>
<dbReference type="PANTHER" id="PTHR43448:SF2">
    <property type="entry name" value="PROTOHEME IX FARNESYLTRANSFERASE, MITOCHONDRIAL"/>
    <property type="match status" value="1"/>
</dbReference>
<dbReference type="Pfam" id="PF01040">
    <property type="entry name" value="UbiA"/>
    <property type="match status" value="1"/>
</dbReference>
<dbReference type="PROSITE" id="PS00943">
    <property type="entry name" value="UBIA"/>
    <property type="match status" value="1"/>
</dbReference>
<feature type="chain" id="PRO_0000326958" description="Protoheme IX farnesyltransferase">
    <location>
        <begin position="1"/>
        <end position="296"/>
    </location>
</feature>
<feature type="topological domain" description="Cytoplasmic" evidence="1">
    <location>
        <begin position="1"/>
        <end position="9"/>
    </location>
</feature>
<feature type="transmembrane region" description="Helical" evidence="1">
    <location>
        <begin position="10"/>
        <end position="28"/>
    </location>
</feature>
<feature type="topological domain" description="Periplasmic" evidence="1">
    <location>
        <begin position="29"/>
        <end position="37"/>
    </location>
</feature>
<feature type="transmembrane region" description="Helical" evidence="1">
    <location>
        <begin position="38"/>
        <end position="56"/>
    </location>
</feature>
<feature type="topological domain" description="Cytoplasmic" evidence="1">
    <location>
        <begin position="57"/>
        <end position="78"/>
    </location>
</feature>
<feature type="transmembrane region" description="Helical" evidence="1">
    <location>
        <begin position="79"/>
        <end position="97"/>
    </location>
</feature>
<feature type="topological domain" description="Periplasmic" evidence="1">
    <location>
        <begin position="98"/>
        <end position="107"/>
    </location>
</feature>
<feature type="transmembrane region" description="Helical" evidence="1">
    <location>
        <begin position="108"/>
        <end position="126"/>
    </location>
</feature>
<feature type="topological domain" description="Cytoplasmic" evidence="1">
    <location>
        <begin position="127"/>
        <end position="197"/>
    </location>
</feature>
<feature type="transmembrane region" description="Helical" evidence="1">
    <location>
        <begin position="198"/>
        <end position="216"/>
    </location>
</feature>
<feature type="topological domain" description="Periplasmic" evidence="1">
    <location>
        <begin position="217"/>
        <end position="228"/>
    </location>
</feature>
<feature type="transmembrane region" description="Helical" evidence="1">
    <location>
        <begin position="229"/>
        <end position="247"/>
    </location>
</feature>
<feature type="topological domain" description="Cytoplasmic" evidence="1">
    <location>
        <begin position="248"/>
        <end position="268"/>
    </location>
</feature>
<feature type="transmembrane region" description="Helical" evidence="1">
    <location>
        <begin position="269"/>
        <end position="287"/>
    </location>
</feature>
<feature type="topological domain" description="Periplasmic" evidence="1">
    <location>
        <begin position="288"/>
        <end position="296"/>
    </location>
</feature>
<proteinExistence type="inferred from homology"/>
<keyword id="KW-0997">Cell inner membrane</keyword>
<keyword id="KW-1003">Cell membrane</keyword>
<keyword id="KW-0350">Heme biosynthesis</keyword>
<keyword id="KW-0472">Membrane</keyword>
<keyword id="KW-1185">Reference proteome</keyword>
<keyword id="KW-0808">Transferase</keyword>
<keyword id="KW-0812">Transmembrane</keyword>
<keyword id="KW-1133">Transmembrane helix</keyword>
<protein>
    <recommendedName>
        <fullName evidence="1">Protoheme IX farnesyltransferase</fullName>
        <ecNumber evidence="1">2.5.1.141</ecNumber>
    </recommendedName>
    <alternativeName>
        <fullName evidence="1">Heme B farnesyltransferase</fullName>
    </alternativeName>
    <alternativeName>
        <fullName evidence="1">Heme O synthase</fullName>
    </alternativeName>
</protein>